<proteinExistence type="inferred from homology"/>
<accession>Q5WB55</accession>
<comment type="function">
    <text evidence="1">Peptide chain release factor 1 directs the termination of translation in response to the peptide chain termination codons UAG and UAA.</text>
</comment>
<comment type="subcellular location">
    <subcellularLocation>
        <location evidence="1">Cytoplasm</location>
    </subcellularLocation>
</comment>
<comment type="PTM">
    <text evidence="1">Methylated by PrmC. Methylation increases the termination efficiency of RF1.</text>
</comment>
<comment type="similarity">
    <text evidence="1">Belongs to the prokaryotic/mitochondrial release factor family.</text>
</comment>
<protein>
    <recommendedName>
        <fullName evidence="1">Peptide chain release factor 1</fullName>
        <shortName evidence="1">RF-1</shortName>
    </recommendedName>
</protein>
<gene>
    <name evidence="1" type="primary">prfA</name>
    <name type="ordered locus">ABC3874</name>
</gene>
<feature type="chain" id="PRO_0000177632" description="Peptide chain release factor 1">
    <location>
        <begin position="1"/>
        <end position="356"/>
    </location>
</feature>
<feature type="modified residue" description="N5-methylglutamine" evidence="1">
    <location>
        <position position="233"/>
    </location>
</feature>
<dbReference type="EMBL" id="AP006627">
    <property type="protein sequence ID" value="BAD66405.1"/>
    <property type="molecule type" value="Genomic_DNA"/>
</dbReference>
<dbReference type="RefSeq" id="WP_011248708.1">
    <property type="nucleotide sequence ID" value="NC_006582.1"/>
</dbReference>
<dbReference type="SMR" id="Q5WB55"/>
<dbReference type="STRING" id="66692.ABC3874"/>
<dbReference type="KEGG" id="bcl:ABC3874"/>
<dbReference type="eggNOG" id="COG0216">
    <property type="taxonomic scope" value="Bacteria"/>
</dbReference>
<dbReference type="HOGENOM" id="CLU_036856_0_1_9"/>
<dbReference type="OrthoDB" id="9806673at2"/>
<dbReference type="Proteomes" id="UP000001168">
    <property type="component" value="Chromosome"/>
</dbReference>
<dbReference type="GO" id="GO:0005737">
    <property type="term" value="C:cytoplasm"/>
    <property type="evidence" value="ECO:0007669"/>
    <property type="project" value="UniProtKB-SubCell"/>
</dbReference>
<dbReference type="GO" id="GO:0016149">
    <property type="term" value="F:translation release factor activity, codon specific"/>
    <property type="evidence" value="ECO:0007669"/>
    <property type="project" value="UniProtKB-UniRule"/>
</dbReference>
<dbReference type="FunFam" id="3.30.160.20:FF:000004">
    <property type="entry name" value="Peptide chain release factor 1"/>
    <property type="match status" value="1"/>
</dbReference>
<dbReference type="FunFam" id="3.30.70.1660:FF:000002">
    <property type="entry name" value="Peptide chain release factor 1"/>
    <property type="match status" value="1"/>
</dbReference>
<dbReference type="FunFam" id="3.30.70.1660:FF:000004">
    <property type="entry name" value="Peptide chain release factor 1"/>
    <property type="match status" value="1"/>
</dbReference>
<dbReference type="Gene3D" id="3.30.160.20">
    <property type="match status" value="1"/>
</dbReference>
<dbReference type="Gene3D" id="3.30.70.1660">
    <property type="match status" value="1"/>
</dbReference>
<dbReference type="Gene3D" id="6.10.140.1950">
    <property type="match status" value="1"/>
</dbReference>
<dbReference type="HAMAP" id="MF_00093">
    <property type="entry name" value="Rel_fac_1"/>
    <property type="match status" value="1"/>
</dbReference>
<dbReference type="InterPro" id="IPR005139">
    <property type="entry name" value="PCRF"/>
</dbReference>
<dbReference type="InterPro" id="IPR000352">
    <property type="entry name" value="Pep_chain_release_fac_I"/>
</dbReference>
<dbReference type="InterPro" id="IPR045853">
    <property type="entry name" value="Pep_chain_release_fac_I_sf"/>
</dbReference>
<dbReference type="InterPro" id="IPR050057">
    <property type="entry name" value="Prokaryotic/Mito_RF"/>
</dbReference>
<dbReference type="InterPro" id="IPR004373">
    <property type="entry name" value="RF-1"/>
</dbReference>
<dbReference type="NCBIfam" id="TIGR00019">
    <property type="entry name" value="prfA"/>
    <property type="match status" value="1"/>
</dbReference>
<dbReference type="NCBIfam" id="NF001859">
    <property type="entry name" value="PRK00591.1"/>
    <property type="match status" value="1"/>
</dbReference>
<dbReference type="PANTHER" id="PTHR43804">
    <property type="entry name" value="LD18447P"/>
    <property type="match status" value="1"/>
</dbReference>
<dbReference type="PANTHER" id="PTHR43804:SF7">
    <property type="entry name" value="LD18447P"/>
    <property type="match status" value="1"/>
</dbReference>
<dbReference type="Pfam" id="PF03462">
    <property type="entry name" value="PCRF"/>
    <property type="match status" value="1"/>
</dbReference>
<dbReference type="Pfam" id="PF00472">
    <property type="entry name" value="RF-1"/>
    <property type="match status" value="1"/>
</dbReference>
<dbReference type="SMART" id="SM00937">
    <property type="entry name" value="PCRF"/>
    <property type="match status" value="1"/>
</dbReference>
<dbReference type="SUPFAM" id="SSF75620">
    <property type="entry name" value="Release factor"/>
    <property type="match status" value="1"/>
</dbReference>
<dbReference type="PROSITE" id="PS00745">
    <property type="entry name" value="RF_PROK_I"/>
    <property type="match status" value="1"/>
</dbReference>
<keyword id="KW-0963">Cytoplasm</keyword>
<keyword id="KW-0488">Methylation</keyword>
<keyword id="KW-0648">Protein biosynthesis</keyword>
<keyword id="KW-1185">Reference proteome</keyword>
<evidence type="ECO:0000255" key="1">
    <source>
        <dbReference type="HAMAP-Rule" id="MF_00093"/>
    </source>
</evidence>
<reference key="1">
    <citation type="submission" date="2003-10" db="EMBL/GenBank/DDBJ databases">
        <title>The complete genome sequence of the alkaliphilic Bacillus clausii KSM-K16.</title>
        <authorList>
            <person name="Takaki Y."/>
            <person name="Kageyama Y."/>
            <person name="Shimamura S."/>
            <person name="Suzuki H."/>
            <person name="Nishi S."/>
            <person name="Hatada Y."/>
            <person name="Kawai S."/>
            <person name="Ito S."/>
            <person name="Horikoshi K."/>
        </authorList>
    </citation>
    <scope>NUCLEOTIDE SEQUENCE [LARGE SCALE GENOMIC DNA]</scope>
    <source>
        <strain>KSM-K16</strain>
    </source>
</reference>
<sequence length="356" mass="40431">MLERLQAVEDRYEYLNEQLSDPNVISNATKLREYSKEQAQIEETVQTYRQYKQVTEQLADAKAMLEEKLDDDMYQMVKEELDELSERKAELEERLKILLLPKDPNDDKNVIVEIRGAAGGDEAQLFAADLYKMYHRYAEMQGWKTEVIEAHATELGGYKEIIFMVNGSGAYSKLKYENGAHRVQRVPQTESGGRIHTSTATVAVLPEAEEVEIDIHEKDIRVDTFASSGPGGQSVNTTMSAVRLTHLPTNTVVSCQDEKSQIKNKEKAMKVLRARIFDKVQQEAQAEYAESRKLAVGTGDRSERIRTYNFPQSRVTDHRIGLTLQKLEQVLQGKLDEIIDALVVADQSEAMKKAEE</sequence>
<name>RF1_SHOC1</name>
<organism>
    <name type="scientific">Shouchella clausii (strain KSM-K16)</name>
    <name type="common">Alkalihalobacillus clausii</name>
    <dbReference type="NCBI Taxonomy" id="66692"/>
    <lineage>
        <taxon>Bacteria</taxon>
        <taxon>Bacillati</taxon>
        <taxon>Bacillota</taxon>
        <taxon>Bacilli</taxon>
        <taxon>Bacillales</taxon>
        <taxon>Bacillaceae</taxon>
        <taxon>Shouchella</taxon>
    </lineage>
</organism>